<feature type="chain" id="PRO_0000103097" description="4-hydroxy-tetrahydrodipicolinate synthase">
    <location>
        <begin position="1"/>
        <end position="288"/>
    </location>
</feature>
<feature type="active site" description="Proton donor/acceptor" evidence="1">
    <location>
        <position position="129"/>
    </location>
</feature>
<feature type="active site" description="Schiff-base intermediate with substrate" evidence="1">
    <location>
        <position position="157"/>
    </location>
</feature>
<feature type="binding site" evidence="1">
    <location>
        <position position="42"/>
    </location>
    <ligand>
        <name>pyruvate</name>
        <dbReference type="ChEBI" id="CHEBI:15361"/>
    </ligand>
</feature>
<feature type="binding site" evidence="1">
    <location>
        <position position="198"/>
    </location>
    <ligand>
        <name>pyruvate</name>
        <dbReference type="ChEBI" id="CHEBI:15361"/>
    </ligand>
</feature>
<feature type="site" description="Part of a proton relay during catalysis" evidence="1">
    <location>
        <position position="41"/>
    </location>
</feature>
<feature type="site" description="Part of a proton relay during catalysis" evidence="1">
    <location>
        <position position="103"/>
    </location>
</feature>
<proteinExistence type="inferred from homology"/>
<organism>
    <name type="scientific">Chlamydia abortus (strain DSM 27085 / S26/3)</name>
    <name type="common">Chlamydophila abortus</name>
    <dbReference type="NCBI Taxonomy" id="218497"/>
    <lineage>
        <taxon>Bacteria</taxon>
        <taxon>Pseudomonadati</taxon>
        <taxon>Chlamydiota</taxon>
        <taxon>Chlamydiia</taxon>
        <taxon>Chlamydiales</taxon>
        <taxon>Chlamydiaceae</taxon>
        <taxon>Chlamydia/Chlamydophila group</taxon>
        <taxon>Chlamydia</taxon>
    </lineage>
</organism>
<keyword id="KW-0028">Amino-acid biosynthesis</keyword>
<keyword id="KW-0963">Cytoplasm</keyword>
<keyword id="KW-0220">Diaminopimelate biosynthesis</keyword>
<keyword id="KW-0456">Lyase</keyword>
<keyword id="KW-0457">Lysine biosynthesis</keyword>
<keyword id="KW-0704">Schiff base</keyword>
<accession>Q5L5G7</accession>
<name>DAPA_CHLAB</name>
<gene>
    <name evidence="1" type="primary">dapA</name>
    <name type="ordered locus">CAB677</name>
</gene>
<protein>
    <recommendedName>
        <fullName evidence="1">4-hydroxy-tetrahydrodipicolinate synthase</fullName>
        <shortName evidence="1">HTPA synthase</shortName>
        <ecNumber evidence="1">4.3.3.7</ecNumber>
    </recommendedName>
</protein>
<reference key="1">
    <citation type="journal article" date="2005" name="Genome Res.">
        <title>The Chlamydophila abortus genome sequence reveals an array of variable proteins that contribute to interspecies variation.</title>
        <authorList>
            <person name="Thomson N.R."/>
            <person name="Yeats C."/>
            <person name="Bell K."/>
            <person name="Holden M.T.G."/>
            <person name="Bentley S.D."/>
            <person name="Livingstone M."/>
            <person name="Cerdeno-Tarraga A.-M."/>
            <person name="Harris B."/>
            <person name="Doggett J."/>
            <person name="Ormond D."/>
            <person name="Mungall K."/>
            <person name="Clarke K."/>
            <person name="Feltwell T."/>
            <person name="Hance Z."/>
            <person name="Sanders M."/>
            <person name="Quail M.A."/>
            <person name="Price C."/>
            <person name="Barrell B.G."/>
            <person name="Parkhill J."/>
            <person name="Longbottom D."/>
        </authorList>
    </citation>
    <scope>NUCLEOTIDE SEQUENCE [LARGE SCALE GENOMIC DNA]</scope>
    <source>
        <strain>DSM 27085 / S26/3</strain>
    </source>
</reference>
<evidence type="ECO:0000255" key="1">
    <source>
        <dbReference type="HAMAP-Rule" id="MF_00418"/>
    </source>
</evidence>
<evidence type="ECO:0000305" key="2"/>
<dbReference type="EC" id="4.3.3.7" evidence="1"/>
<dbReference type="EMBL" id="CR848038">
    <property type="protein sequence ID" value="CAH64124.1"/>
    <property type="molecule type" value="Genomic_DNA"/>
</dbReference>
<dbReference type="RefSeq" id="WP_006344292.1">
    <property type="nucleotide sequence ID" value="NC_004552.2"/>
</dbReference>
<dbReference type="SMR" id="Q5L5G7"/>
<dbReference type="GeneID" id="93024230"/>
<dbReference type="KEGG" id="cab:CAB677"/>
<dbReference type="eggNOG" id="COG0329">
    <property type="taxonomic scope" value="Bacteria"/>
</dbReference>
<dbReference type="HOGENOM" id="CLU_049343_7_0_0"/>
<dbReference type="OrthoDB" id="9782828at2"/>
<dbReference type="UniPathway" id="UPA00034">
    <property type="reaction ID" value="UER00017"/>
</dbReference>
<dbReference type="Proteomes" id="UP000001012">
    <property type="component" value="Chromosome"/>
</dbReference>
<dbReference type="GO" id="GO:0005829">
    <property type="term" value="C:cytosol"/>
    <property type="evidence" value="ECO:0007669"/>
    <property type="project" value="TreeGrafter"/>
</dbReference>
<dbReference type="GO" id="GO:0008840">
    <property type="term" value="F:4-hydroxy-tetrahydrodipicolinate synthase activity"/>
    <property type="evidence" value="ECO:0007669"/>
    <property type="project" value="UniProtKB-UniRule"/>
</dbReference>
<dbReference type="GO" id="GO:0019877">
    <property type="term" value="P:diaminopimelate biosynthetic process"/>
    <property type="evidence" value="ECO:0007669"/>
    <property type="project" value="UniProtKB-UniRule"/>
</dbReference>
<dbReference type="GO" id="GO:0009089">
    <property type="term" value="P:lysine biosynthetic process via diaminopimelate"/>
    <property type="evidence" value="ECO:0007669"/>
    <property type="project" value="UniProtKB-UniRule"/>
</dbReference>
<dbReference type="Gene3D" id="3.20.20.70">
    <property type="entry name" value="Aldolase class I"/>
    <property type="match status" value="1"/>
</dbReference>
<dbReference type="HAMAP" id="MF_00418">
    <property type="entry name" value="DapA"/>
    <property type="match status" value="1"/>
</dbReference>
<dbReference type="InterPro" id="IPR013785">
    <property type="entry name" value="Aldolase_TIM"/>
</dbReference>
<dbReference type="InterPro" id="IPR005263">
    <property type="entry name" value="DapA"/>
</dbReference>
<dbReference type="InterPro" id="IPR002220">
    <property type="entry name" value="DapA-like"/>
</dbReference>
<dbReference type="InterPro" id="IPR020625">
    <property type="entry name" value="Schiff_base-form_aldolases_AS"/>
</dbReference>
<dbReference type="InterPro" id="IPR020624">
    <property type="entry name" value="Schiff_base-form_aldolases_CS"/>
</dbReference>
<dbReference type="NCBIfam" id="TIGR00674">
    <property type="entry name" value="dapA"/>
    <property type="match status" value="1"/>
</dbReference>
<dbReference type="PANTHER" id="PTHR12128:SF66">
    <property type="entry name" value="4-HYDROXY-2-OXOGLUTARATE ALDOLASE, MITOCHONDRIAL"/>
    <property type="match status" value="1"/>
</dbReference>
<dbReference type="PANTHER" id="PTHR12128">
    <property type="entry name" value="DIHYDRODIPICOLINATE SYNTHASE"/>
    <property type="match status" value="1"/>
</dbReference>
<dbReference type="Pfam" id="PF00701">
    <property type="entry name" value="DHDPS"/>
    <property type="match status" value="1"/>
</dbReference>
<dbReference type="PIRSF" id="PIRSF001365">
    <property type="entry name" value="DHDPS"/>
    <property type="match status" value="1"/>
</dbReference>
<dbReference type="PRINTS" id="PR00146">
    <property type="entry name" value="DHPICSNTHASE"/>
</dbReference>
<dbReference type="SMART" id="SM01130">
    <property type="entry name" value="DHDPS"/>
    <property type="match status" value="1"/>
</dbReference>
<dbReference type="SUPFAM" id="SSF51569">
    <property type="entry name" value="Aldolase"/>
    <property type="match status" value="1"/>
</dbReference>
<dbReference type="PROSITE" id="PS00665">
    <property type="entry name" value="DHDPS_1"/>
    <property type="match status" value="1"/>
</dbReference>
<dbReference type="PROSITE" id="PS00666">
    <property type="entry name" value="DHDPS_2"/>
    <property type="match status" value="1"/>
</dbReference>
<sequence length="288" mass="32436">MKLLTASVTPFLPDHSIDFLSFENLLRFQERESHGVVLLGSTGESLSMTAKEKESLVSYACSLNLKVPIIVGVPGTSLHEASEWIHTCQSYPIYGFLITTPIYTKPGVHGQTLWFESLLNKANKPAILYNIPSRSGTTLYLDTVRSLAAHPFFYGLKDSGGSIKHCQEYAQMSSDFVLYCGDDGLWPQMYECGARGLISVLSNIWPKEAREWVEDPHHQYRADLWREVSSWLNQTTNPIAIKALLAYKQVIAHNTLRLPLSIQDLQCAESIPEIIKKMAQWKYSCAHV</sequence>
<comment type="function">
    <text evidence="1">Catalyzes the condensation of (S)-aspartate-beta-semialdehyde [(S)-ASA] and pyruvate to 4-hydroxy-tetrahydrodipicolinate (HTPA).</text>
</comment>
<comment type="catalytic activity">
    <reaction evidence="1">
        <text>L-aspartate 4-semialdehyde + pyruvate = (2S,4S)-4-hydroxy-2,3,4,5-tetrahydrodipicolinate + H2O + H(+)</text>
        <dbReference type="Rhea" id="RHEA:34171"/>
        <dbReference type="ChEBI" id="CHEBI:15361"/>
        <dbReference type="ChEBI" id="CHEBI:15377"/>
        <dbReference type="ChEBI" id="CHEBI:15378"/>
        <dbReference type="ChEBI" id="CHEBI:67139"/>
        <dbReference type="ChEBI" id="CHEBI:537519"/>
        <dbReference type="EC" id="4.3.3.7"/>
    </reaction>
</comment>
<comment type="pathway">
    <text evidence="1">Amino-acid biosynthesis; L-lysine biosynthesis via DAP pathway; (S)-tetrahydrodipicolinate from L-aspartate: step 3/4.</text>
</comment>
<comment type="subunit">
    <text evidence="1">Homotetramer; dimer of dimers.</text>
</comment>
<comment type="subcellular location">
    <subcellularLocation>
        <location evidence="1">Cytoplasm</location>
    </subcellularLocation>
</comment>
<comment type="similarity">
    <text evidence="1">Belongs to the DapA family.</text>
</comment>
<comment type="caution">
    <text evidence="2">Was originally thought to be a dihydrodipicolinate synthase (DHDPS), catalyzing the condensation of (S)-aspartate-beta-semialdehyde [(S)-ASA] and pyruvate to dihydrodipicolinate (DHDP). However, it was shown in E.coli that the product of the enzymatic reaction is not dihydrodipicolinate but in fact (4S)-4-hydroxy-2,3,4,5-tetrahydro-(2S)-dipicolinic acid (HTPA), and that the consecutive dehydration reaction leading to DHDP is not spontaneous but catalyzed by DapB.</text>
</comment>